<organism>
    <name type="scientific">Aeromonas hydrophila subsp. hydrophila (strain ATCC 7966 / DSM 30187 / BCRC 13018 / CCUG 14551 / JCM 1027 / KCTC 2358 / NCIMB 9240 / NCTC 8049)</name>
    <dbReference type="NCBI Taxonomy" id="380703"/>
    <lineage>
        <taxon>Bacteria</taxon>
        <taxon>Pseudomonadati</taxon>
        <taxon>Pseudomonadota</taxon>
        <taxon>Gammaproteobacteria</taxon>
        <taxon>Aeromonadales</taxon>
        <taxon>Aeromonadaceae</taxon>
        <taxon>Aeromonas</taxon>
    </lineage>
</organism>
<keyword id="KW-0067">ATP-binding</keyword>
<keyword id="KW-0227">DNA damage</keyword>
<keyword id="KW-0234">DNA repair</keyword>
<keyword id="KW-0238">DNA-binding</keyword>
<keyword id="KW-0547">Nucleotide-binding</keyword>
<keyword id="KW-1185">Reference proteome</keyword>
<comment type="function">
    <text evidence="1">This protein is involved in the repair of mismatches in DNA. It is possible that it carries out the mismatch recognition step. This protein has a weak ATPase activity.</text>
</comment>
<comment type="similarity">
    <text evidence="1">Belongs to the DNA mismatch repair MutS family.</text>
</comment>
<sequence>MTAQHQATGTAPGANLSAHTPMMQQYLTLKAENPEILLFYRMGDFYELFYDDARKASQLLDISLTKRGQSAGSPIPMAGVPYHAIEGYLAKLVQLGESAAICEQVGDPATSKGPVERKVIRIITPGTVSDEALLSERQDNLIAAVYHDGRRFGYGTMDIGSGRFFINQFEKEETLLAELQRTNPAELLYPESFTFLHHVEGRRGLRRRPEWEFELGTARKLLCQQFGTQDLVGFGVEQSETALCAAGCLMQYVKDTQRTALPHIRSVRLEQPDHAVIMDAATRRNLELTQNLAGGHDNTLSAVLDCTATPMGSRLLKRWIHQPIRDQVILKGRQSTIKELIEQNLYDELGGLLRQVGDVERVLARLALRSARPRDLTRLRQAFAQLPELQRLLAESEHEAVQQLRERASTFPELLDLLERAVMEVPPVLIRDGGVIRDGFNQELDELRDLANGATASLARIEERERLLTGINTLKVGYNKVHGFYIEVSRANSHLVPAHYIRRQTLKNNERYIIDELKKYEDKVLTAQAQALALEKRLYEELLDALLPHLGDLQESAAALAELDVLANLAERAETLDYRCPTLIDEDQILIEAGRHPVVEQVMTDPFIANPINLQRSRRMLIITGPNMGGKSTYMRQTALIVLLAHIGAFVPADSARIGPIDRIFTRIGASDDLASGRSTFMVEMTETANILNNATARSLVLMDEIGRGTSTYDGLSLAWACAEQLASKIGAYTLFATHYFELTRLPELMEGLANVHLDAVEHGDTIAFMHAVQEGAASRSYGLQVAALAGVPKSVIQQARHKLHELESATPVAAGESRPAPVAMAPQSHPVVDELEAVRPDELTPRQALDLLYRLKQML</sequence>
<name>MUTS_AERHH</name>
<reference key="1">
    <citation type="journal article" date="2006" name="J. Bacteriol.">
        <title>Genome sequence of Aeromonas hydrophila ATCC 7966T: jack of all trades.</title>
        <authorList>
            <person name="Seshadri R."/>
            <person name="Joseph S.W."/>
            <person name="Chopra A.K."/>
            <person name="Sha J."/>
            <person name="Shaw J."/>
            <person name="Graf J."/>
            <person name="Haft D.H."/>
            <person name="Wu M."/>
            <person name="Ren Q."/>
            <person name="Rosovitz M.J."/>
            <person name="Madupu R."/>
            <person name="Tallon L."/>
            <person name="Kim M."/>
            <person name="Jin S."/>
            <person name="Vuong H."/>
            <person name="Stine O.C."/>
            <person name="Ali A."/>
            <person name="Horneman A.J."/>
            <person name="Heidelberg J.F."/>
        </authorList>
    </citation>
    <scope>NUCLEOTIDE SEQUENCE [LARGE SCALE GENOMIC DNA]</scope>
    <source>
        <strain>ATCC 7966 / DSM 30187 / BCRC 13018 / CCUG 14551 / JCM 1027 / KCTC 2358 / NCIMB 9240 / NCTC 8049</strain>
    </source>
</reference>
<feature type="chain" id="PRO_0000335105" description="DNA mismatch repair protein MutS">
    <location>
        <begin position="1"/>
        <end position="860"/>
    </location>
</feature>
<feature type="binding site" evidence="1">
    <location>
        <begin position="625"/>
        <end position="632"/>
    </location>
    <ligand>
        <name>ATP</name>
        <dbReference type="ChEBI" id="CHEBI:30616"/>
    </ligand>
</feature>
<accession>A0KPG5</accession>
<dbReference type="EMBL" id="CP000462">
    <property type="protein sequence ID" value="ABK38264.1"/>
    <property type="molecule type" value="Genomic_DNA"/>
</dbReference>
<dbReference type="RefSeq" id="WP_011707433.1">
    <property type="nucleotide sequence ID" value="NC_008570.1"/>
</dbReference>
<dbReference type="RefSeq" id="YP_858166.1">
    <property type="nucleotide sequence ID" value="NC_008570.1"/>
</dbReference>
<dbReference type="SMR" id="A0KPG5"/>
<dbReference type="STRING" id="380703.AHA_3718"/>
<dbReference type="EnsemblBacteria" id="ABK38264">
    <property type="protein sequence ID" value="ABK38264"/>
    <property type="gene ID" value="AHA_3718"/>
</dbReference>
<dbReference type="GeneID" id="4488544"/>
<dbReference type="KEGG" id="aha:AHA_3718"/>
<dbReference type="PATRIC" id="fig|380703.7.peg.3691"/>
<dbReference type="eggNOG" id="COG0249">
    <property type="taxonomic scope" value="Bacteria"/>
</dbReference>
<dbReference type="HOGENOM" id="CLU_002472_4_0_6"/>
<dbReference type="OrthoDB" id="9802448at2"/>
<dbReference type="Proteomes" id="UP000000756">
    <property type="component" value="Chromosome"/>
</dbReference>
<dbReference type="GO" id="GO:0005829">
    <property type="term" value="C:cytosol"/>
    <property type="evidence" value="ECO:0007669"/>
    <property type="project" value="TreeGrafter"/>
</dbReference>
<dbReference type="GO" id="GO:0005524">
    <property type="term" value="F:ATP binding"/>
    <property type="evidence" value="ECO:0007669"/>
    <property type="project" value="UniProtKB-UniRule"/>
</dbReference>
<dbReference type="GO" id="GO:0140664">
    <property type="term" value="F:ATP-dependent DNA damage sensor activity"/>
    <property type="evidence" value="ECO:0007669"/>
    <property type="project" value="InterPro"/>
</dbReference>
<dbReference type="GO" id="GO:0003684">
    <property type="term" value="F:damaged DNA binding"/>
    <property type="evidence" value="ECO:0007669"/>
    <property type="project" value="UniProtKB-UniRule"/>
</dbReference>
<dbReference type="GO" id="GO:0030983">
    <property type="term" value="F:mismatched DNA binding"/>
    <property type="evidence" value="ECO:0007669"/>
    <property type="project" value="InterPro"/>
</dbReference>
<dbReference type="GO" id="GO:0006298">
    <property type="term" value="P:mismatch repair"/>
    <property type="evidence" value="ECO:0007669"/>
    <property type="project" value="UniProtKB-UniRule"/>
</dbReference>
<dbReference type="CDD" id="cd03284">
    <property type="entry name" value="ABC_MutS1"/>
    <property type="match status" value="1"/>
</dbReference>
<dbReference type="FunFam" id="1.10.1420.10:FF:000002">
    <property type="entry name" value="DNA mismatch repair protein MutS"/>
    <property type="match status" value="1"/>
</dbReference>
<dbReference type="FunFam" id="3.30.420.110:FF:000001">
    <property type="entry name" value="DNA mismatch repair protein MutS"/>
    <property type="match status" value="1"/>
</dbReference>
<dbReference type="FunFam" id="3.40.1170.10:FF:000001">
    <property type="entry name" value="DNA mismatch repair protein MutS"/>
    <property type="match status" value="1"/>
</dbReference>
<dbReference type="FunFam" id="3.40.50.300:FF:000283">
    <property type="entry name" value="DNA mismatch repair protein MutS"/>
    <property type="match status" value="1"/>
</dbReference>
<dbReference type="Gene3D" id="1.10.1420.10">
    <property type="match status" value="2"/>
</dbReference>
<dbReference type="Gene3D" id="6.10.140.430">
    <property type="match status" value="1"/>
</dbReference>
<dbReference type="Gene3D" id="3.40.1170.10">
    <property type="entry name" value="DNA repair protein MutS, domain I"/>
    <property type="match status" value="1"/>
</dbReference>
<dbReference type="Gene3D" id="3.30.420.110">
    <property type="entry name" value="MutS, connector domain"/>
    <property type="match status" value="1"/>
</dbReference>
<dbReference type="Gene3D" id="3.40.50.300">
    <property type="entry name" value="P-loop containing nucleotide triphosphate hydrolases"/>
    <property type="match status" value="1"/>
</dbReference>
<dbReference type="HAMAP" id="MF_00096">
    <property type="entry name" value="MutS"/>
    <property type="match status" value="1"/>
</dbReference>
<dbReference type="InterPro" id="IPR005748">
    <property type="entry name" value="DNA_mismatch_repair_MutS"/>
</dbReference>
<dbReference type="InterPro" id="IPR007695">
    <property type="entry name" value="DNA_mismatch_repair_MutS-lik_N"/>
</dbReference>
<dbReference type="InterPro" id="IPR017261">
    <property type="entry name" value="DNA_mismatch_repair_MutS/MSH"/>
</dbReference>
<dbReference type="InterPro" id="IPR000432">
    <property type="entry name" value="DNA_mismatch_repair_MutS_C"/>
</dbReference>
<dbReference type="InterPro" id="IPR007861">
    <property type="entry name" value="DNA_mismatch_repair_MutS_clamp"/>
</dbReference>
<dbReference type="InterPro" id="IPR007696">
    <property type="entry name" value="DNA_mismatch_repair_MutS_core"/>
</dbReference>
<dbReference type="InterPro" id="IPR016151">
    <property type="entry name" value="DNA_mismatch_repair_MutS_N"/>
</dbReference>
<dbReference type="InterPro" id="IPR036187">
    <property type="entry name" value="DNA_mismatch_repair_MutS_sf"/>
</dbReference>
<dbReference type="InterPro" id="IPR007860">
    <property type="entry name" value="DNA_mmatch_repair_MutS_con_dom"/>
</dbReference>
<dbReference type="InterPro" id="IPR045076">
    <property type="entry name" value="MutS"/>
</dbReference>
<dbReference type="InterPro" id="IPR036678">
    <property type="entry name" value="MutS_con_dom_sf"/>
</dbReference>
<dbReference type="InterPro" id="IPR027417">
    <property type="entry name" value="P-loop_NTPase"/>
</dbReference>
<dbReference type="NCBIfam" id="TIGR01070">
    <property type="entry name" value="mutS1"/>
    <property type="match status" value="1"/>
</dbReference>
<dbReference type="NCBIfam" id="NF003810">
    <property type="entry name" value="PRK05399.1"/>
    <property type="match status" value="1"/>
</dbReference>
<dbReference type="PANTHER" id="PTHR11361:SF34">
    <property type="entry name" value="DNA MISMATCH REPAIR PROTEIN MSH1, MITOCHONDRIAL"/>
    <property type="match status" value="1"/>
</dbReference>
<dbReference type="PANTHER" id="PTHR11361">
    <property type="entry name" value="DNA MISMATCH REPAIR PROTEIN MUTS FAMILY MEMBER"/>
    <property type="match status" value="1"/>
</dbReference>
<dbReference type="Pfam" id="PF01624">
    <property type="entry name" value="MutS_I"/>
    <property type="match status" value="1"/>
</dbReference>
<dbReference type="Pfam" id="PF05188">
    <property type="entry name" value="MutS_II"/>
    <property type="match status" value="1"/>
</dbReference>
<dbReference type="Pfam" id="PF05192">
    <property type="entry name" value="MutS_III"/>
    <property type="match status" value="1"/>
</dbReference>
<dbReference type="Pfam" id="PF05190">
    <property type="entry name" value="MutS_IV"/>
    <property type="match status" value="1"/>
</dbReference>
<dbReference type="Pfam" id="PF00488">
    <property type="entry name" value="MutS_V"/>
    <property type="match status" value="1"/>
</dbReference>
<dbReference type="PIRSF" id="PIRSF037677">
    <property type="entry name" value="DNA_mis_repair_Msh6"/>
    <property type="match status" value="1"/>
</dbReference>
<dbReference type="SMART" id="SM00534">
    <property type="entry name" value="MUTSac"/>
    <property type="match status" value="1"/>
</dbReference>
<dbReference type="SMART" id="SM00533">
    <property type="entry name" value="MUTSd"/>
    <property type="match status" value="1"/>
</dbReference>
<dbReference type="SUPFAM" id="SSF55271">
    <property type="entry name" value="DNA repair protein MutS, domain I"/>
    <property type="match status" value="1"/>
</dbReference>
<dbReference type="SUPFAM" id="SSF53150">
    <property type="entry name" value="DNA repair protein MutS, domain II"/>
    <property type="match status" value="1"/>
</dbReference>
<dbReference type="SUPFAM" id="SSF48334">
    <property type="entry name" value="DNA repair protein MutS, domain III"/>
    <property type="match status" value="1"/>
</dbReference>
<dbReference type="SUPFAM" id="SSF52540">
    <property type="entry name" value="P-loop containing nucleoside triphosphate hydrolases"/>
    <property type="match status" value="1"/>
</dbReference>
<dbReference type="PROSITE" id="PS00486">
    <property type="entry name" value="DNA_MISMATCH_REPAIR_2"/>
    <property type="match status" value="1"/>
</dbReference>
<protein>
    <recommendedName>
        <fullName evidence="1">DNA mismatch repair protein MutS</fullName>
    </recommendedName>
</protein>
<proteinExistence type="inferred from homology"/>
<gene>
    <name evidence="1" type="primary">mutS</name>
    <name type="ordered locus">AHA_3718</name>
</gene>
<evidence type="ECO:0000255" key="1">
    <source>
        <dbReference type="HAMAP-Rule" id="MF_00096"/>
    </source>
</evidence>